<reference key="1">
    <citation type="journal article" date="1997" name="J. Bacteriol.">
        <title>The kdp system of Clostridium acetobutylicum: cloning, sequencing, and transcriptional regulation in response to potassium concentration.</title>
        <authorList>
            <person name="Treuner-Lange A."/>
            <person name="Kuhn A."/>
            <person name="Duerre P."/>
        </authorList>
    </citation>
    <scope>NUCLEOTIDE SEQUENCE [GENOMIC DNA]</scope>
    <source>
        <strain>ATCC 824 / DSM 792 / JCM 1419 / IAM 19013 / LMG 5710 / NBRC 13948 / NRRL B-527 / VKM B-1787 / 2291 / W</strain>
    </source>
</reference>
<reference key="2">
    <citation type="journal article" date="2001" name="J. Bacteriol.">
        <title>Genome sequence and comparative analysis of the solvent-producing bacterium Clostridium acetobutylicum.</title>
        <authorList>
            <person name="Noelling J."/>
            <person name="Breton G."/>
            <person name="Omelchenko M.V."/>
            <person name="Makarova K.S."/>
            <person name="Zeng Q."/>
            <person name="Gibson R."/>
            <person name="Lee H.M."/>
            <person name="Dubois J."/>
            <person name="Qiu D."/>
            <person name="Hitti J."/>
            <person name="Wolf Y.I."/>
            <person name="Tatusov R.L."/>
            <person name="Sabathe F."/>
            <person name="Doucette-Stamm L.A."/>
            <person name="Soucaille P."/>
            <person name="Daly M.J."/>
            <person name="Bennett G.N."/>
            <person name="Koonin E.V."/>
            <person name="Smith D.R."/>
        </authorList>
    </citation>
    <scope>NUCLEOTIDE SEQUENCE [LARGE SCALE GENOMIC DNA]</scope>
    <source>
        <strain>ATCC 824 / DSM 792 / JCM 1419 / IAM 19013 / LMG 5710 / NBRC 13948 / NRRL B-527 / VKM B-1787 / 2291 / W</strain>
    </source>
</reference>
<name>KDPD_CLOAB</name>
<sequence>MDINYERPDPYYLLNKIDKEEKNKNRGKLKIFFGYAAGVGKTYAMLRAAHYMKELGKDIVIGYIEPHARMDTMSLTKGLPQIPVKNIDYKGVILREFDVDKALLRKPEIILVDELAHTNAKSQRNKKRWKDIEELLDAGIDVYTTLNVQHIESLNDIVANITHVSVRETIPDKVFDDADKVELIDIEPDELLKRFTDGKIYRKEQVKRAFNNFFTKNNLYALREIALRRTADRVNFEIEIARLSKGQITVMATSDQILACIGTSPSSARIIRTAARMAESYHSKWIALYVDTGRSLGKADKETLNANFNLVELLGGELVTVHGENVADQIIRYAELRNTTKIVIGKNHKRTGTLLHFYAKDVVDKLMDSNSYIDVYMIPNSSYYRDHKNSILSKISIQHKGSVKDVLKAIIIMAITTDIAELFSYMGFKDVNVIMIFILGVIIVYMATKGQIMGIISSIAAVLVFNYRFTEPKNSFIVYDKSYLVTFPIMMIVAFIIGSLTNKVQKEAQDSNMREKRTQTLYIVSGKLLSAVGTSEVVSIGIKYISRLVNRNVICYLADTSNKLSTPFVYKKDKGAKEEIIMSKDENAAAYWTFLNGKESGCGTSTFYRAKGYYIPIKIKNKVLGVIGVSCPSGPLRPQKKAVVDTVTGQIAIALDREILSKEQEKSKVEIERERLRSNLLRSISHDLRSPLAGIKGAASTILENGELIDEKRKQELINGIYEDTEWLIRLIENLLSMTKFDEGNTKIKKDVELVEEVVSEAVQRSSKYFKNHKIKVSVPEDVIMVSMDGSLIEQVIINLLDNASKFSPKGSTIEIKVYEKKKDVVFEIIDEGQGISEDILPNIFDRFFTNGSKISDSRRGVGLGLAICKSIVEAHGGKIEAVNKGSGGAIFKFNIPKEL</sequence>
<organism>
    <name type="scientific">Clostridium acetobutylicum (strain ATCC 824 / DSM 792 / JCM 1419 / IAM 19013 / LMG 5710 / NBRC 13948 / NRRL B-527 / VKM B-1787 / 2291 / W)</name>
    <dbReference type="NCBI Taxonomy" id="272562"/>
    <lineage>
        <taxon>Bacteria</taxon>
        <taxon>Bacillati</taxon>
        <taxon>Bacillota</taxon>
        <taxon>Clostridia</taxon>
        <taxon>Eubacteriales</taxon>
        <taxon>Clostridiaceae</taxon>
        <taxon>Clostridium</taxon>
    </lineage>
</organism>
<accession>P94608</accession>
<keyword id="KW-0067">ATP-binding</keyword>
<keyword id="KW-1003">Cell membrane</keyword>
<keyword id="KW-0418">Kinase</keyword>
<keyword id="KW-0472">Membrane</keyword>
<keyword id="KW-0547">Nucleotide-binding</keyword>
<keyword id="KW-0597">Phosphoprotein</keyword>
<keyword id="KW-1185">Reference proteome</keyword>
<keyword id="KW-0808">Transferase</keyword>
<keyword id="KW-0812">Transmembrane</keyword>
<keyword id="KW-1133">Transmembrane helix</keyword>
<keyword id="KW-0902">Two-component regulatory system</keyword>
<gene>
    <name type="primary">kdpD</name>
    <name type="ordered locus">CA_C3678</name>
</gene>
<protein>
    <recommendedName>
        <fullName>Sensor protein KdpD</fullName>
        <ecNumber>2.7.13.3</ecNumber>
    </recommendedName>
</protein>
<proteinExistence type="inferred from homology"/>
<feature type="chain" id="PRO_0000074771" description="Sensor protein KdpD">
    <location>
        <begin position="1"/>
        <end position="900"/>
    </location>
</feature>
<feature type="transmembrane region" description="Helical" evidence="2">
    <location>
        <begin position="406"/>
        <end position="426"/>
    </location>
</feature>
<feature type="transmembrane region" description="Helical" evidence="2">
    <location>
        <begin position="436"/>
        <end position="456"/>
    </location>
</feature>
<feature type="transmembrane region" description="Helical" evidence="2">
    <location>
        <begin position="482"/>
        <end position="502"/>
    </location>
</feature>
<feature type="transmembrane region" description="Helical" evidence="2">
    <location>
        <begin position="522"/>
        <end position="542"/>
    </location>
</feature>
<feature type="domain" description="Histidine kinase" evidence="3">
    <location>
        <begin position="683"/>
        <end position="900"/>
    </location>
</feature>
<feature type="modified residue" description="Phosphohistidine; by autocatalysis" evidence="3">
    <location>
        <position position="686"/>
    </location>
</feature>
<feature type="sequence conflict" description="In Ref. 1; AAB39095." evidence="4" ref="1">
    <original>S</original>
    <variation>R</variation>
    <location>
        <position position="678"/>
    </location>
</feature>
<evidence type="ECO:0000250" key="1"/>
<evidence type="ECO:0000255" key="2"/>
<evidence type="ECO:0000255" key="3">
    <source>
        <dbReference type="PROSITE-ProRule" id="PRU00107"/>
    </source>
</evidence>
<evidence type="ECO:0000305" key="4"/>
<dbReference type="EC" id="2.7.13.3"/>
<dbReference type="EMBL" id="U39673">
    <property type="protein sequence ID" value="AAB39095.1"/>
    <property type="molecule type" value="Genomic_DNA"/>
</dbReference>
<dbReference type="EMBL" id="AE001437">
    <property type="protein sequence ID" value="AAK81599.1"/>
    <property type="molecule type" value="Genomic_DNA"/>
</dbReference>
<dbReference type="PIR" id="D97351">
    <property type="entry name" value="D97351"/>
</dbReference>
<dbReference type="RefSeq" id="NP_350259.1">
    <property type="nucleotide sequence ID" value="NC_003030.1"/>
</dbReference>
<dbReference type="RefSeq" id="WP_010966939.1">
    <property type="nucleotide sequence ID" value="NC_003030.1"/>
</dbReference>
<dbReference type="SMR" id="P94608"/>
<dbReference type="STRING" id="272562.CA_C3678"/>
<dbReference type="KEGG" id="cac:CA_C3678"/>
<dbReference type="PATRIC" id="fig|272562.8.peg.3867"/>
<dbReference type="eggNOG" id="COG2205">
    <property type="taxonomic scope" value="Bacteria"/>
</dbReference>
<dbReference type="HOGENOM" id="CLU_000445_113_1_9"/>
<dbReference type="OrthoDB" id="9806130at2"/>
<dbReference type="BRENDA" id="2.7.13.3">
    <property type="organism ID" value="1452"/>
</dbReference>
<dbReference type="Proteomes" id="UP000000814">
    <property type="component" value="Chromosome"/>
</dbReference>
<dbReference type="GO" id="GO:0005886">
    <property type="term" value="C:plasma membrane"/>
    <property type="evidence" value="ECO:0007669"/>
    <property type="project" value="UniProtKB-SubCell"/>
</dbReference>
<dbReference type="GO" id="GO:0005524">
    <property type="term" value="F:ATP binding"/>
    <property type="evidence" value="ECO:0007669"/>
    <property type="project" value="UniProtKB-KW"/>
</dbReference>
<dbReference type="GO" id="GO:0000155">
    <property type="term" value="F:phosphorelay sensor kinase activity"/>
    <property type="evidence" value="ECO:0007669"/>
    <property type="project" value="InterPro"/>
</dbReference>
<dbReference type="CDD" id="cd00075">
    <property type="entry name" value="HATPase"/>
    <property type="match status" value="1"/>
</dbReference>
<dbReference type="CDD" id="cd00082">
    <property type="entry name" value="HisKA"/>
    <property type="match status" value="1"/>
</dbReference>
<dbReference type="CDD" id="cd01987">
    <property type="entry name" value="USP_KdpD-like"/>
    <property type="match status" value="1"/>
</dbReference>
<dbReference type="FunFam" id="3.40.50.300:FF:000483">
    <property type="entry name" value="Sensor histidine kinase KdpD"/>
    <property type="match status" value="1"/>
</dbReference>
<dbReference type="FunFam" id="3.30.565.10:FF:000042">
    <property type="entry name" value="Two-component sensor histidine kinase KdpD"/>
    <property type="match status" value="1"/>
</dbReference>
<dbReference type="Gene3D" id="1.10.287.130">
    <property type="match status" value="1"/>
</dbReference>
<dbReference type="Gene3D" id="3.30.450.40">
    <property type="match status" value="1"/>
</dbReference>
<dbReference type="Gene3D" id="1.20.120.620">
    <property type="entry name" value="Backbone structure of the membrane domain of e. Coli histidine kinase receptor kdpd"/>
    <property type="match status" value="1"/>
</dbReference>
<dbReference type="Gene3D" id="3.30.565.10">
    <property type="entry name" value="Histidine kinase-like ATPase, C-terminal domain"/>
    <property type="match status" value="1"/>
</dbReference>
<dbReference type="Gene3D" id="3.40.50.620">
    <property type="entry name" value="HUPs"/>
    <property type="match status" value="1"/>
</dbReference>
<dbReference type="Gene3D" id="3.40.50.300">
    <property type="entry name" value="P-loop containing nucleotide triphosphate hydrolases"/>
    <property type="match status" value="1"/>
</dbReference>
<dbReference type="InterPro" id="IPR029016">
    <property type="entry name" value="GAF-like_dom_sf"/>
</dbReference>
<dbReference type="InterPro" id="IPR036890">
    <property type="entry name" value="HATPase_C_sf"/>
</dbReference>
<dbReference type="InterPro" id="IPR005467">
    <property type="entry name" value="His_kinase_dom"/>
</dbReference>
<dbReference type="InterPro" id="IPR003661">
    <property type="entry name" value="HisK_dim/P_dom"/>
</dbReference>
<dbReference type="InterPro" id="IPR036097">
    <property type="entry name" value="HisK_dim/P_sf"/>
</dbReference>
<dbReference type="InterPro" id="IPR052023">
    <property type="entry name" value="Histidine_kinase_KdpD"/>
</dbReference>
<dbReference type="InterPro" id="IPR038318">
    <property type="entry name" value="KdpD_sf"/>
</dbReference>
<dbReference type="InterPro" id="IPR025201">
    <property type="entry name" value="KdpD_TM"/>
</dbReference>
<dbReference type="InterPro" id="IPR027417">
    <property type="entry name" value="P-loop_NTPase"/>
</dbReference>
<dbReference type="InterPro" id="IPR014729">
    <property type="entry name" value="Rossmann-like_a/b/a_fold"/>
</dbReference>
<dbReference type="InterPro" id="IPR004358">
    <property type="entry name" value="Sig_transdc_His_kin-like_C"/>
</dbReference>
<dbReference type="InterPro" id="IPR003852">
    <property type="entry name" value="Sig_transdc_His_kinase_KdpD_N"/>
</dbReference>
<dbReference type="PANTHER" id="PTHR45569">
    <property type="entry name" value="SENSOR PROTEIN KDPD"/>
    <property type="match status" value="1"/>
</dbReference>
<dbReference type="PANTHER" id="PTHR45569:SF1">
    <property type="entry name" value="SENSOR PROTEIN KDPD"/>
    <property type="match status" value="1"/>
</dbReference>
<dbReference type="Pfam" id="PF13493">
    <property type="entry name" value="DUF4118"/>
    <property type="match status" value="1"/>
</dbReference>
<dbReference type="Pfam" id="PF02518">
    <property type="entry name" value="HATPase_c"/>
    <property type="match status" value="1"/>
</dbReference>
<dbReference type="Pfam" id="PF00512">
    <property type="entry name" value="HisKA"/>
    <property type="match status" value="1"/>
</dbReference>
<dbReference type="Pfam" id="PF02702">
    <property type="entry name" value="KdpD"/>
    <property type="match status" value="1"/>
</dbReference>
<dbReference type="PRINTS" id="PR00344">
    <property type="entry name" value="BCTRLSENSOR"/>
</dbReference>
<dbReference type="SMART" id="SM00387">
    <property type="entry name" value="HATPase_c"/>
    <property type="match status" value="1"/>
</dbReference>
<dbReference type="SMART" id="SM00388">
    <property type="entry name" value="HisKA"/>
    <property type="match status" value="1"/>
</dbReference>
<dbReference type="SUPFAM" id="SSF52402">
    <property type="entry name" value="Adenine nucleotide alpha hydrolases-like"/>
    <property type="match status" value="1"/>
</dbReference>
<dbReference type="SUPFAM" id="SSF55874">
    <property type="entry name" value="ATPase domain of HSP90 chaperone/DNA topoisomerase II/histidine kinase"/>
    <property type="match status" value="1"/>
</dbReference>
<dbReference type="SUPFAM" id="SSF47384">
    <property type="entry name" value="Homodimeric domain of signal transducing histidine kinase"/>
    <property type="match status" value="1"/>
</dbReference>
<dbReference type="SUPFAM" id="SSF52540">
    <property type="entry name" value="P-loop containing nucleoside triphosphate hydrolases"/>
    <property type="match status" value="1"/>
</dbReference>
<dbReference type="PROSITE" id="PS50109">
    <property type="entry name" value="HIS_KIN"/>
    <property type="match status" value="1"/>
</dbReference>
<comment type="function">
    <text evidence="1">Member of the two-component regulatory system KdpD/KdpE involved in the regulation of the kdp operon. KdpD may function as a membrane-associated protein kinase that phosphorylates KdpE in response to environmental signals (By similarity).</text>
</comment>
<comment type="catalytic activity">
    <reaction>
        <text>ATP + protein L-histidine = ADP + protein N-phospho-L-histidine.</text>
        <dbReference type="EC" id="2.7.13.3"/>
    </reaction>
</comment>
<comment type="subcellular location">
    <subcellularLocation>
        <location evidence="4">Cell membrane</location>
        <topology evidence="4">Multi-pass membrane protein</topology>
    </subcellularLocation>
</comment>
<comment type="similarity">
    <text evidence="4">In the central section; belongs to the universal stress protein A family.</text>
</comment>